<reference key="1">
    <citation type="journal article" date="1996" name="DNA Res.">
        <title>Sequence analysis of the genome of the unicellular cyanobacterium Synechocystis sp. strain PCC6803. II. Sequence determination of the entire genome and assignment of potential protein-coding regions.</title>
        <authorList>
            <person name="Kaneko T."/>
            <person name="Sato S."/>
            <person name="Kotani H."/>
            <person name="Tanaka A."/>
            <person name="Asamizu E."/>
            <person name="Nakamura Y."/>
            <person name="Miyajima N."/>
            <person name="Hirosawa M."/>
            <person name="Sugiura M."/>
            <person name="Sasamoto S."/>
            <person name="Kimura T."/>
            <person name="Hosouchi T."/>
            <person name="Matsuno A."/>
            <person name="Muraki A."/>
            <person name="Nakazaki N."/>
            <person name="Naruo K."/>
            <person name="Okumura S."/>
            <person name="Shimpo S."/>
            <person name="Takeuchi C."/>
            <person name="Wada T."/>
            <person name="Watanabe A."/>
            <person name="Yamada M."/>
            <person name="Yasuda M."/>
            <person name="Tabata S."/>
        </authorList>
    </citation>
    <scope>NUCLEOTIDE SEQUENCE [LARGE SCALE GENOMIC DNA]</scope>
    <source>
        <strain>ATCC 27184 / PCC 6803 / Kazusa</strain>
    </source>
</reference>
<accession>P73883</accession>
<feature type="chain" id="PRO_0000157863" description="Uncharacterized protein sll0249">
    <location>
        <begin position="1"/>
        <end position="251"/>
    </location>
</feature>
<protein>
    <recommendedName>
        <fullName>Uncharacterized protein sll0249</fullName>
    </recommendedName>
</protein>
<proteinExistence type="predicted"/>
<gene>
    <name type="ordered locus">sll0249</name>
</gene>
<comment type="similarity">
    <text evidence="1">To Anabaena PCC 7120 alr2406.</text>
</comment>
<evidence type="ECO:0000305" key="1"/>
<sequence>MTNQNMPPETPIIWLNFSPALRRFDRPLLRQLGKSQAILQWDYHQTADEPNCLTVGLDLIGEYLENFHQPVHLIGHSTSGLLALLYARQCPEKVRSLSLLSVGVYPALDWQAHYYSQFDAMRYSRHLLLGQMAHHLFNCRSLRQTQTIVNILENDLLTSISPHSLYKQLIILPNHIAVPLLVAVGETDGIIDTSLFNGWQRWKKPGDRLWLCPEGKYFFQFEHPEITAFQLQQFWRSLQGQEASSSTSLLA</sequence>
<name>Y249_SYNY3</name>
<keyword id="KW-1185">Reference proteome</keyword>
<dbReference type="EMBL" id="BA000022">
    <property type="protein sequence ID" value="BAA17946.1"/>
    <property type="molecule type" value="Genomic_DNA"/>
</dbReference>
<dbReference type="PIR" id="S75084">
    <property type="entry name" value="S75084"/>
</dbReference>
<dbReference type="SMR" id="P73883"/>
<dbReference type="STRING" id="1148.gene:10498815"/>
<dbReference type="ESTHER" id="syny3-y249">
    <property type="family name" value="AlphaBeta_hydrolase"/>
</dbReference>
<dbReference type="PaxDb" id="1148-1653029"/>
<dbReference type="EnsemblBacteria" id="BAA17946">
    <property type="protein sequence ID" value="BAA17946"/>
    <property type="gene ID" value="BAA17946"/>
</dbReference>
<dbReference type="KEGG" id="syn:sll0249"/>
<dbReference type="eggNOG" id="COG3208">
    <property type="taxonomic scope" value="Bacteria"/>
</dbReference>
<dbReference type="InParanoid" id="P73883"/>
<dbReference type="Proteomes" id="UP000001425">
    <property type="component" value="Chromosome"/>
</dbReference>
<dbReference type="Gene3D" id="3.40.50.1820">
    <property type="entry name" value="alpha/beta hydrolase"/>
    <property type="match status" value="1"/>
</dbReference>
<dbReference type="InterPro" id="IPR029058">
    <property type="entry name" value="AB_hydrolase_fold"/>
</dbReference>
<dbReference type="SUPFAM" id="SSF53474">
    <property type="entry name" value="alpha/beta-Hydrolases"/>
    <property type="match status" value="1"/>
</dbReference>
<organism>
    <name type="scientific">Synechocystis sp. (strain ATCC 27184 / PCC 6803 / Kazusa)</name>
    <dbReference type="NCBI Taxonomy" id="1111708"/>
    <lineage>
        <taxon>Bacteria</taxon>
        <taxon>Bacillati</taxon>
        <taxon>Cyanobacteriota</taxon>
        <taxon>Cyanophyceae</taxon>
        <taxon>Synechococcales</taxon>
        <taxon>Merismopediaceae</taxon>
        <taxon>Synechocystis</taxon>
    </lineage>
</organism>